<dbReference type="EC" id="1.5.99.12" evidence="3"/>
<dbReference type="EMBL" id="CR855229">
    <property type="protein sequence ID" value="CAH67878.1"/>
    <property type="molecule type" value="Genomic_DNA"/>
</dbReference>
<dbReference type="EMBL" id="CM000129">
    <property type="protein sequence ID" value="EAY94893.1"/>
    <property type="molecule type" value="Genomic_DNA"/>
</dbReference>
<dbReference type="SMR" id="A2XVN3"/>
<dbReference type="STRING" id="39946.A2XVN3"/>
<dbReference type="GlyCosmos" id="A2XVN3">
    <property type="glycosylation" value="1 site, No reported glycans"/>
</dbReference>
<dbReference type="EnsemblPlants" id="BGIOSGA016782-TA">
    <property type="protein sequence ID" value="BGIOSGA016782-PA"/>
    <property type="gene ID" value="BGIOSGA016782"/>
</dbReference>
<dbReference type="EnsemblPlants" id="OsGoSa_04g0020010.01">
    <property type="protein sequence ID" value="OsGoSa_04g0020010.01"/>
    <property type="gene ID" value="OsGoSa_04g0020010"/>
</dbReference>
<dbReference type="EnsemblPlants" id="OsIR64_04g0019540.01">
    <property type="protein sequence ID" value="OsIR64_04g0019540.01"/>
    <property type="gene ID" value="OsIR64_04g0019540"/>
</dbReference>
<dbReference type="EnsemblPlants" id="OsKYG_04g0019900.01">
    <property type="protein sequence ID" value="OsKYG_04g0019900.01"/>
    <property type="gene ID" value="OsKYG_04g0019900"/>
</dbReference>
<dbReference type="EnsemblPlants" id="OsLaMu_04g0020560.01">
    <property type="protein sequence ID" value="OsLaMu_04g0020560.01"/>
    <property type="gene ID" value="OsLaMu_04g0020560"/>
</dbReference>
<dbReference type="EnsemblPlants" id="OsLima_04g0020040.01">
    <property type="protein sequence ID" value="OsLima_04g0020040.01"/>
    <property type="gene ID" value="OsLima_04g0020040"/>
</dbReference>
<dbReference type="EnsemblPlants" id="OsLiXu_04g0020380.01">
    <property type="protein sequence ID" value="OsLiXu_04g0020380.01"/>
    <property type="gene ID" value="OsLiXu_04g0020380"/>
</dbReference>
<dbReference type="EnsemblPlants" id="OsMH63_04G020900_01">
    <property type="protein sequence ID" value="OsMH63_04G020900_01"/>
    <property type="gene ID" value="OsMH63_04G020900"/>
</dbReference>
<dbReference type="EnsemblPlants" id="OsPr106_04g0020740.01">
    <property type="protein sequence ID" value="OsPr106_04g0020740.01"/>
    <property type="gene ID" value="OsPr106_04g0020740"/>
</dbReference>
<dbReference type="Gramene" id="BGIOSGA016782-TA">
    <property type="protein sequence ID" value="BGIOSGA016782-PA"/>
    <property type="gene ID" value="BGIOSGA016782"/>
</dbReference>
<dbReference type="Gramene" id="OsGoSa_04g0020010.01">
    <property type="protein sequence ID" value="OsGoSa_04g0020010.01"/>
    <property type="gene ID" value="OsGoSa_04g0020010"/>
</dbReference>
<dbReference type="Gramene" id="OsIR64_04g0019540.01">
    <property type="protein sequence ID" value="OsIR64_04g0019540.01"/>
    <property type="gene ID" value="OsIR64_04g0019540"/>
</dbReference>
<dbReference type="Gramene" id="OsKYG_04g0019900.01">
    <property type="protein sequence ID" value="OsKYG_04g0019900.01"/>
    <property type="gene ID" value="OsKYG_04g0019900"/>
</dbReference>
<dbReference type="Gramene" id="OsLaMu_04g0020560.01">
    <property type="protein sequence ID" value="OsLaMu_04g0020560.01"/>
    <property type="gene ID" value="OsLaMu_04g0020560"/>
</dbReference>
<dbReference type="Gramene" id="OsLima_04g0020040.01">
    <property type="protein sequence ID" value="OsLima_04g0020040.01"/>
    <property type="gene ID" value="OsLima_04g0020040"/>
</dbReference>
<dbReference type="Gramene" id="OsLiXu_04g0020380.01">
    <property type="protein sequence ID" value="OsLiXu_04g0020380.01"/>
    <property type="gene ID" value="OsLiXu_04g0020380"/>
</dbReference>
<dbReference type="Gramene" id="OsMH63_04G020900_01">
    <property type="protein sequence ID" value="OsMH63_04G020900_01"/>
    <property type="gene ID" value="OsMH63_04G020900"/>
</dbReference>
<dbReference type="Gramene" id="OsPr106_04g0020740.01">
    <property type="protein sequence ID" value="OsPr106_04g0020740.01"/>
    <property type="gene ID" value="OsPr106_04g0020740"/>
</dbReference>
<dbReference type="HOGENOM" id="CLU_024955_1_0_1"/>
<dbReference type="OMA" id="DGSRADH"/>
<dbReference type="OrthoDB" id="415825at2759"/>
<dbReference type="Proteomes" id="UP000007015">
    <property type="component" value="Chromosome 4"/>
</dbReference>
<dbReference type="GO" id="GO:0005576">
    <property type="term" value="C:extracellular region"/>
    <property type="evidence" value="ECO:0007669"/>
    <property type="project" value="UniProtKB-SubCell"/>
</dbReference>
<dbReference type="GO" id="GO:0019139">
    <property type="term" value="F:cytokinin dehydrogenase activity"/>
    <property type="evidence" value="ECO:0007669"/>
    <property type="project" value="UniProtKB-EC"/>
</dbReference>
<dbReference type="GO" id="GO:0071949">
    <property type="term" value="F:FAD binding"/>
    <property type="evidence" value="ECO:0007669"/>
    <property type="project" value="InterPro"/>
</dbReference>
<dbReference type="GO" id="GO:0009690">
    <property type="term" value="P:cytokinin metabolic process"/>
    <property type="evidence" value="ECO:0007669"/>
    <property type="project" value="InterPro"/>
</dbReference>
<dbReference type="Gene3D" id="3.30.465.10">
    <property type="match status" value="1"/>
</dbReference>
<dbReference type="Gene3D" id="3.40.462.10">
    <property type="entry name" value="FAD-linked oxidases, C-terminal domain"/>
    <property type="match status" value="1"/>
</dbReference>
<dbReference type="Gene3D" id="3.30.43.10">
    <property type="entry name" value="Uridine Diphospho-n-acetylenolpyruvylglucosamine Reductase, domain 2"/>
    <property type="match status" value="1"/>
</dbReference>
<dbReference type="InterPro" id="IPR016170">
    <property type="entry name" value="Cytok_DH_C_sf"/>
</dbReference>
<dbReference type="InterPro" id="IPR015345">
    <property type="entry name" value="Cytokinin_DH_FAD/cytokin-bd"/>
</dbReference>
<dbReference type="InterPro" id="IPR016166">
    <property type="entry name" value="FAD-bd_PCMH"/>
</dbReference>
<dbReference type="InterPro" id="IPR036318">
    <property type="entry name" value="FAD-bd_PCMH-like_sf"/>
</dbReference>
<dbReference type="InterPro" id="IPR016167">
    <property type="entry name" value="FAD-bd_PCMH_sub1"/>
</dbReference>
<dbReference type="InterPro" id="IPR016169">
    <property type="entry name" value="FAD-bd_PCMH_sub2"/>
</dbReference>
<dbReference type="InterPro" id="IPR016164">
    <property type="entry name" value="FAD-linked_Oxase-like_C"/>
</dbReference>
<dbReference type="InterPro" id="IPR050432">
    <property type="entry name" value="FAD-linked_Oxidoreductases_BP"/>
</dbReference>
<dbReference type="InterPro" id="IPR006094">
    <property type="entry name" value="Oxid_FAD_bind_N"/>
</dbReference>
<dbReference type="PANTHER" id="PTHR13878:SF59">
    <property type="entry name" value="CYTOKININ DEHYDROGENASE 8"/>
    <property type="match status" value="1"/>
</dbReference>
<dbReference type="PANTHER" id="PTHR13878">
    <property type="entry name" value="GULONOLACTONE OXIDASE"/>
    <property type="match status" value="1"/>
</dbReference>
<dbReference type="Pfam" id="PF09265">
    <property type="entry name" value="Cytokin-bind"/>
    <property type="match status" value="1"/>
</dbReference>
<dbReference type="Pfam" id="PF01565">
    <property type="entry name" value="FAD_binding_4"/>
    <property type="match status" value="1"/>
</dbReference>
<dbReference type="SUPFAM" id="SSF56176">
    <property type="entry name" value="FAD-binding/transporter-associated domain-like"/>
    <property type="match status" value="1"/>
</dbReference>
<dbReference type="SUPFAM" id="SSF55103">
    <property type="entry name" value="FAD-linked oxidases, C-terminal domain"/>
    <property type="match status" value="1"/>
</dbReference>
<dbReference type="PROSITE" id="PS51387">
    <property type="entry name" value="FAD_PCMH"/>
    <property type="match status" value="1"/>
</dbReference>
<organism>
    <name type="scientific">Oryza sativa subsp. indica</name>
    <name type="common">Rice</name>
    <dbReference type="NCBI Taxonomy" id="39946"/>
    <lineage>
        <taxon>Eukaryota</taxon>
        <taxon>Viridiplantae</taxon>
        <taxon>Streptophyta</taxon>
        <taxon>Embryophyta</taxon>
        <taxon>Tracheophyta</taxon>
        <taxon>Spermatophyta</taxon>
        <taxon>Magnoliopsida</taxon>
        <taxon>Liliopsida</taxon>
        <taxon>Poales</taxon>
        <taxon>Poaceae</taxon>
        <taxon>BOP clade</taxon>
        <taxon>Oryzoideae</taxon>
        <taxon>Oryzeae</taxon>
        <taxon>Oryzinae</taxon>
        <taxon>Oryza</taxon>
        <taxon>Oryza sativa</taxon>
    </lineage>
</organism>
<feature type="signal peptide" evidence="6">
    <location>
        <begin position="1"/>
        <end position="26"/>
    </location>
</feature>
<feature type="chain" id="PRO_0000394212" description="Cytokinin dehydrogenase 8">
    <location>
        <begin position="27"/>
        <end position="532"/>
    </location>
</feature>
<feature type="domain" description="FAD-binding PCMH-type" evidence="7">
    <location>
        <begin position="51"/>
        <end position="238"/>
    </location>
</feature>
<feature type="binding site" evidence="4">
    <location>
        <position position="87"/>
    </location>
    <ligand>
        <name>FAD</name>
        <dbReference type="ChEBI" id="CHEBI:57692"/>
    </ligand>
</feature>
<feature type="binding site" evidence="5">
    <location>
        <position position="89"/>
    </location>
    <ligand>
        <name>FAD</name>
        <dbReference type="ChEBI" id="CHEBI:57692"/>
    </ligand>
</feature>
<feature type="binding site" evidence="5">
    <location>
        <position position="91"/>
    </location>
    <ligand>
        <name>FAD</name>
        <dbReference type="ChEBI" id="CHEBI:57692"/>
    </ligand>
</feature>
<feature type="binding site" evidence="5">
    <location>
        <position position="93"/>
    </location>
    <ligand>
        <name>FAD</name>
        <dbReference type="ChEBI" id="CHEBI:57692"/>
    </ligand>
</feature>
<feature type="binding site" evidence="5">
    <location>
        <position position="97"/>
    </location>
    <ligand>
        <name>FAD</name>
        <dbReference type="ChEBI" id="CHEBI:57692"/>
    </ligand>
</feature>
<feature type="binding site" evidence="5">
    <location>
        <position position="162"/>
    </location>
    <ligand>
        <name>FAD</name>
        <dbReference type="ChEBI" id="CHEBI:57692"/>
    </ligand>
</feature>
<feature type="binding site" evidence="5">
    <location>
        <position position="167"/>
    </location>
    <ligand>
        <name>FAD</name>
        <dbReference type="ChEBI" id="CHEBI:57692"/>
    </ligand>
</feature>
<feature type="binding site" evidence="5">
    <location>
        <position position="173"/>
    </location>
    <ligand>
        <name>FAD</name>
        <dbReference type="ChEBI" id="CHEBI:57692"/>
    </ligand>
</feature>
<feature type="binding site" evidence="5">
    <location>
        <position position="177"/>
    </location>
    <ligand>
        <name>FAD</name>
        <dbReference type="ChEBI" id="CHEBI:57692"/>
    </ligand>
</feature>
<feature type="binding site" evidence="5">
    <location>
        <position position="228"/>
    </location>
    <ligand>
        <name>FAD</name>
        <dbReference type="ChEBI" id="CHEBI:57692"/>
    </ligand>
</feature>
<feature type="binding site" evidence="5">
    <location>
        <position position="482"/>
    </location>
    <ligand>
        <name>FAD</name>
        <dbReference type="ChEBI" id="CHEBI:57692"/>
    </ligand>
</feature>
<feature type="binding site" evidence="5">
    <location>
        <position position="520"/>
    </location>
    <ligand>
        <name>FAD</name>
        <dbReference type="ChEBI" id="CHEBI:57692"/>
    </ligand>
</feature>
<feature type="modified residue" description="Pros-8alpha-FAD histidine" evidence="5">
    <location>
        <position position="92"/>
    </location>
</feature>
<feature type="glycosylation site" description="N-linked (GlcNAc...) asparagine" evidence="6">
    <location>
        <position position="420"/>
    </location>
</feature>
<name>CKX8_ORYSI</name>
<protein>
    <recommendedName>
        <fullName>Cytokinin dehydrogenase 8</fullName>
        <ecNumber evidence="3">1.5.99.12</ecNumber>
    </recommendedName>
    <alternativeName>
        <fullName>Cytokinin oxidase 8</fullName>
        <shortName>OsCKX8</shortName>
    </alternativeName>
</protein>
<proteinExistence type="inferred from homology"/>
<keyword id="KW-0274">FAD</keyword>
<keyword id="KW-0285">Flavoprotein</keyword>
<keyword id="KW-0325">Glycoprotein</keyword>
<keyword id="KW-0560">Oxidoreductase</keyword>
<keyword id="KW-1185">Reference proteome</keyword>
<keyword id="KW-0964">Secreted</keyword>
<keyword id="KW-0732">Signal</keyword>
<reference key="1">
    <citation type="journal article" date="2002" name="Nature">
        <title>Sequence and analysis of rice chromosome 4.</title>
        <authorList>
            <person name="Feng Q."/>
            <person name="Zhang Y."/>
            <person name="Hao P."/>
            <person name="Wang S."/>
            <person name="Fu G."/>
            <person name="Huang Y."/>
            <person name="Li Y."/>
            <person name="Zhu J."/>
            <person name="Liu Y."/>
            <person name="Hu X."/>
            <person name="Jia P."/>
            <person name="Zhang Y."/>
            <person name="Zhao Q."/>
            <person name="Ying K."/>
            <person name="Yu S."/>
            <person name="Tang Y."/>
            <person name="Weng Q."/>
            <person name="Zhang L."/>
            <person name="Lu Y."/>
            <person name="Mu J."/>
            <person name="Lu Y."/>
            <person name="Zhang L.S."/>
            <person name="Yu Z."/>
            <person name="Fan D."/>
            <person name="Liu X."/>
            <person name="Lu T."/>
            <person name="Li C."/>
            <person name="Wu Y."/>
            <person name="Sun T."/>
            <person name="Lei H."/>
            <person name="Li T."/>
            <person name="Hu H."/>
            <person name="Guan J."/>
            <person name="Wu M."/>
            <person name="Zhang R."/>
            <person name="Zhou B."/>
            <person name="Chen Z."/>
            <person name="Chen L."/>
            <person name="Jin Z."/>
            <person name="Wang R."/>
            <person name="Yin H."/>
            <person name="Cai Z."/>
            <person name="Ren S."/>
            <person name="Lv G."/>
            <person name="Gu W."/>
            <person name="Zhu G."/>
            <person name="Tu Y."/>
            <person name="Jia J."/>
            <person name="Zhang Y."/>
            <person name="Chen J."/>
            <person name="Kang H."/>
            <person name="Chen X."/>
            <person name="Shao C."/>
            <person name="Sun Y."/>
            <person name="Hu Q."/>
            <person name="Zhang X."/>
            <person name="Zhang W."/>
            <person name="Wang L."/>
            <person name="Ding C."/>
            <person name="Sheng H."/>
            <person name="Gu J."/>
            <person name="Chen S."/>
            <person name="Ni L."/>
            <person name="Zhu F."/>
            <person name="Chen W."/>
            <person name="Lan L."/>
            <person name="Lai Y."/>
            <person name="Cheng Z."/>
            <person name="Gu M."/>
            <person name="Jiang J."/>
            <person name="Li J."/>
            <person name="Hong G."/>
            <person name="Xue Y."/>
            <person name="Han B."/>
        </authorList>
    </citation>
    <scope>NUCLEOTIDE SEQUENCE [LARGE SCALE GENOMIC DNA]</scope>
    <source>
        <strain>cv. Guang-Lu-Ai No.4</strain>
    </source>
</reference>
<reference key="2">
    <citation type="journal article" date="2005" name="PLoS Biol.">
        <title>The genomes of Oryza sativa: a history of duplications.</title>
        <authorList>
            <person name="Yu J."/>
            <person name="Wang J."/>
            <person name="Lin W."/>
            <person name="Li S."/>
            <person name="Li H."/>
            <person name="Zhou J."/>
            <person name="Ni P."/>
            <person name="Dong W."/>
            <person name="Hu S."/>
            <person name="Zeng C."/>
            <person name="Zhang J."/>
            <person name="Zhang Y."/>
            <person name="Li R."/>
            <person name="Xu Z."/>
            <person name="Li S."/>
            <person name="Li X."/>
            <person name="Zheng H."/>
            <person name="Cong L."/>
            <person name="Lin L."/>
            <person name="Yin J."/>
            <person name="Geng J."/>
            <person name="Li G."/>
            <person name="Shi J."/>
            <person name="Liu J."/>
            <person name="Lv H."/>
            <person name="Li J."/>
            <person name="Wang J."/>
            <person name="Deng Y."/>
            <person name="Ran L."/>
            <person name="Shi X."/>
            <person name="Wang X."/>
            <person name="Wu Q."/>
            <person name="Li C."/>
            <person name="Ren X."/>
            <person name="Wang J."/>
            <person name="Wang X."/>
            <person name="Li D."/>
            <person name="Liu D."/>
            <person name="Zhang X."/>
            <person name="Ji Z."/>
            <person name="Zhao W."/>
            <person name="Sun Y."/>
            <person name="Zhang Z."/>
            <person name="Bao J."/>
            <person name="Han Y."/>
            <person name="Dong L."/>
            <person name="Ji J."/>
            <person name="Chen P."/>
            <person name="Wu S."/>
            <person name="Liu J."/>
            <person name="Xiao Y."/>
            <person name="Bu D."/>
            <person name="Tan J."/>
            <person name="Yang L."/>
            <person name="Ye C."/>
            <person name="Zhang J."/>
            <person name="Xu J."/>
            <person name="Zhou Y."/>
            <person name="Yu Y."/>
            <person name="Zhang B."/>
            <person name="Zhuang S."/>
            <person name="Wei H."/>
            <person name="Liu B."/>
            <person name="Lei M."/>
            <person name="Yu H."/>
            <person name="Li Y."/>
            <person name="Xu H."/>
            <person name="Wei S."/>
            <person name="He X."/>
            <person name="Fang L."/>
            <person name="Zhang Z."/>
            <person name="Zhang Y."/>
            <person name="Huang X."/>
            <person name="Su Z."/>
            <person name="Tong W."/>
            <person name="Li J."/>
            <person name="Tong Z."/>
            <person name="Li S."/>
            <person name="Ye J."/>
            <person name="Wang L."/>
            <person name="Fang L."/>
            <person name="Lei T."/>
            <person name="Chen C.-S."/>
            <person name="Chen H.-C."/>
            <person name="Xu Z."/>
            <person name="Li H."/>
            <person name="Huang H."/>
            <person name="Zhang F."/>
            <person name="Xu H."/>
            <person name="Li N."/>
            <person name="Zhao C."/>
            <person name="Li S."/>
            <person name="Dong L."/>
            <person name="Huang Y."/>
            <person name="Li L."/>
            <person name="Xi Y."/>
            <person name="Qi Q."/>
            <person name="Li W."/>
            <person name="Zhang B."/>
            <person name="Hu W."/>
            <person name="Zhang Y."/>
            <person name="Tian X."/>
            <person name="Jiao Y."/>
            <person name="Liang X."/>
            <person name="Jin J."/>
            <person name="Gao L."/>
            <person name="Zheng W."/>
            <person name="Hao B."/>
            <person name="Liu S.-M."/>
            <person name="Wang W."/>
            <person name="Yuan L."/>
            <person name="Cao M."/>
            <person name="McDermott J."/>
            <person name="Samudrala R."/>
            <person name="Wang J."/>
            <person name="Wong G.K.-S."/>
            <person name="Yang H."/>
        </authorList>
    </citation>
    <scope>NUCLEOTIDE SEQUENCE [LARGE SCALE GENOMIC DNA]</scope>
    <source>
        <strain>cv. 93-11</strain>
    </source>
</reference>
<comment type="function">
    <text evidence="2">Catalyzes the oxidation of cytokinins, a family of N(6)-substituted adenine derivatives that are plant hormones, where the substituent is an isopentenyl group.</text>
</comment>
<comment type="catalytic activity">
    <reaction evidence="3">
        <text>N(6)-dimethylallyladenine + A + H2O = 3-methyl-2-butenal + adenine + AH2</text>
        <dbReference type="Rhea" id="RHEA:13625"/>
        <dbReference type="ChEBI" id="CHEBI:13193"/>
        <dbReference type="ChEBI" id="CHEBI:15377"/>
        <dbReference type="ChEBI" id="CHEBI:15825"/>
        <dbReference type="ChEBI" id="CHEBI:16708"/>
        <dbReference type="ChEBI" id="CHEBI:17499"/>
        <dbReference type="ChEBI" id="CHEBI:17660"/>
        <dbReference type="EC" id="1.5.99.12"/>
    </reaction>
</comment>
<comment type="cofactor">
    <cofactor evidence="3">
        <name>FAD</name>
        <dbReference type="ChEBI" id="CHEBI:57692"/>
    </cofactor>
</comment>
<comment type="subunit">
    <text evidence="1">Monomer.</text>
</comment>
<comment type="subcellular location">
    <subcellularLocation>
        <location evidence="1">Secreted</location>
        <location evidence="1">Extracellular space</location>
    </subcellularLocation>
</comment>
<comment type="similarity">
    <text evidence="8">Belongs to the oxygen-dependent FAD-linked oxidoreductase family.</text>
</comment>
<sequence>MELKAMYLYAAVLAVLLCSSVNFIQSPTDVLGPVALLEPTPSSARDFGAVVSDAPFAVMRPESPDDIALLLGALSSTAPSPRATVAAVGAGHSLHGQAQARDGIVVETRALPRDVHVVSARAHGGDDDATVRAYADVGAGALWVEVLEECLKLGLAPPSWTDYLYLTVGGTLSNGGISGQTFKHGPQISNVLQLEVVTGKGEVVTCSPTEIPELFFAVLGGLGQFGIITRARIPLQLAPPKVRWVRAFYDSFETFTGDQELLVSMPEQVDYVEGFMVLNEQSLHSSSVAFPAQLNFSPDFGSKGRKKVYYCIEFAVHDFQQDSSRADHVVKLVSAKLSYLRPHVYSVEVSYFDFLNRVRMEEESLRSRGLWDVPHPWLNVFVPKHGITQFKGLLMDTVSADDFEGPILVYPLLTDKWDGNTSAVVPAAPDGVMYIFGVLRSTDPARCGRACVDSIMARHRRVADEACRDGGGGGRGIGAKQYLARQPSPARWRDHFGAGWGRFAARKARFDPLHVLGPGQGIFPRTDSAGSM</sequence>
<accession>A2XVN3</accession>
<accession>Q7XKG1</accession>
<evidence type="ECO:0000250" key="1"/>
<evidence type="ECO:0000250" key="2">
    <source>
        <dbReference type="UniProtKB" id="Q6Z955"/>
    </source>
</evidence>
<evidence type="ECO:0000250" key="3">
    <source>
        <dbReference type="UniProtKB" id="Q8LNV6"/>
    </source>
</evidence>
<evidence type="ECO:0000250" key="4">
    <source>
        <dbReference type="UniProtKB" id="Q9FUJ1"/>
    </source>
</evidence>
<evidence type="ECO:0000250" key="5">
    <source>
        <dbReference type="UniProtKB" id="Q9T0N8"/>
    </source>
</evidence>
<evidence type="ECO:0000255" key="6"/>
<evidence type="ECO:0000255" key="7">
    <source>
        <dbReference type="PROSITE-ProRule" id="PRU00718"/>
    </source>
</evidence>
<evidence type="ECO:0000305" key="8"/>
<gene>
    <name type="primary">CKX8</name>
    <name type="ORF">OsI_16693</name>
    <name type="ORF">OSIGBa0153E02-OSIGBa0093I20.7</name>
</gene>